<sequence length="274" mass="30390">MFRLPLQCVLWGCLLSSVHPEPPTACREKQYLINSQCCSLCQPGWKLVNDCTEVTETECLPCGKGEFLDTWNRETHCHQHKYCDPNLGLRVQQEGTSVTDNICVCKEGRHCTSKACESCVLYHSCSPGFGVKQIATGVSDTICEPCPVGFFSNVSSAFEKCRPWTRCETKGLAEQQAGTDKTDAVCGPQNRLRLLVVIPIMLGILFAILLVLVFIKKVDRKPQDKAPCTKQIPQEIDDLPGPNPTPPVQETLHGCQPVAQEDGKESRISVQERQ</sequence>
<name>TNR5_CALJA</name>
<reference key="1">
    <citation type="journal article" date="2008" name="Tohoku J. Exp. Med.">
        <title>Comparison of 30 immunity-related genes from the common marmoset with orthologues from human and mouse.</title>
        <authorList>
            <person name="Kohu K."/>
            <person name="Yamabe E."/>
            <person name="Matsuzawa A."/>
            <person name="Onda D."/>
            <person name="Suemizu H."/>
            <person name="Sasaki E."/>
            <person name="Tanioka Y."/>
            <person name="Yagita H."/>
            <person name="Suzuki D."/>
            <person name="Kametani Y."/>
            <person name="Takai T."/>
            <person name="Toyoda A."/>
            <person name="Habu S."/>
            <person name="Satake M."/>
        </authorList>
    </citation>
    <scope>NUCLEOTIDE SEQUENCE [MRNA]</scope>
</reference>
<evidence type="ECO:0000250" key="1"/>
<evidence type="ECO:0000250" key="2">
    <source>
        <dbReference type="UniProtKB" id="P25942"/>
    </source>
</evidence>
<evidence type="ECO:0000250" key="3">
    <source>
        <dbReference type="UniProtKB" id="P27512"/>
    </source>
</evidence>
<evidence type="ECO:0000255" key="4"/>
<evidence type="ECO:0000255" key="5">
    <source>
        <dbReference type="PROSITE-ProRule" id="PRU00206"/>
    </source>
</evidence>
<evidence type="ECO:0000256" key="6">
    <source>
        <dbReference type="SAM" id="MobiDB-lite"/>
    </source>
</evidence>
<organism>
    <name type="scientific">Callithrix jacchus</name>
    <name type="common">White-tufted-ear marmoset</name>
    <dbReference type="NCBI Taxonomy" id="9483"/>
    <lineage>
        <taxon>Eukaryota</taxon>
        <taxon>Metazoa</taxon>
        <taxon>Chordata</taxon>
        <taxon>Craniata</taxon>
        <taxon>Vertebrata</taxon>
        <taxon>Euteleostomi</taxon>
        <taxon>Mammalia</taxon>
        <taxon>Eutheria</taxon>
        <taxon>Euarchontoglires</taxon>
        <taxon>Primates</taxon>
        <taxon>Haplorrhini</taxon>
        <taxon>Platyrrhini</taxon>
        <taxon>Cebidae</taxon>
        <taxon>Callitrichinae</taxon>
        <taxon>Callithrix</taxon>
        <taxon>Callithrix</taxon>
    </lineage>
</organism>
<keyword id="KW-1015">Disulfide bond</keyword>
<keyword id="KW-0325">Glycoprotein</keyword>
<keyword id="KW-0391">Immunity</keyword>
<keyword id="KW-0472">Membrane</keyword>
<keyword id="KW-0675">Receptor</keyword>
<keyword id="KW-1185">Reference proteome</keyword>
<keyword id="KW-0677">Repeat</keyword>
<keyword id="KW-0732">Signal</keyword>
<keyword id="KW-0812">Transmembrane</keyword>
<keyword id="KW-1133">Transmembrane helix</keyword>
<proteinExistence type="evidence at transcript level"/>
<feature type="signal peptide" evidence="4">
    <location>
        <begin position="1"/>
        <end position="20"/>
    </location>
</feature>
<feature type="chain" id="PRO_0000252694" description="Tumor necrosis factor receptor superfamily member 5">
    <location>
        <begin position="21"/>
        <end position="274"/>
    </location>
</feature>
<feature type="topological domain" description="Extracellular" evidence="4">
    <location>
        <begin position="21"/>
        <end position="194"/>
    </location>
</feature>
<feature type="transmembrane region" description="Helical" evidence="4">
    <location>
        <begin position="195"/>
        <end position="215"/>
    </location>
</feature>
<feature type="topological domain" description="Cytoplasmic" evidence="4">
    <location>
        <begin position="216"/>
        <end position="274"/>
    </location>
</feature>
<feature type="repeat" description="TNFR-Cys 1">
    <location>
        <begin position="25"/>
        <end position="60"/>
    </location>
</feature>
<feature type="repeat" description="TNFR-Cys 2">
    <location>
        <begin position="61"/>
        <end position="103"/>
    </location>
</feature>
<feature type="repeat" description="TNFR-Cys 3">
    <location>
        <begin position="104"/>
        <end position="144"/>
    </location>
</feature>
<feature type="repeat" description="TNFR-Cys 4">
    <location>
        <begin position="145"/>
        <end position="187"/>
    </location>
</feature>
<feature type="region of interest" description="Disordered" evidence="6">
    <location>
        <begin position="224"/>
        <end position="274"/>
    </location>
</feature>
<feature type="compositionally biased region" description="Basic and acidic residues" evidence="6">
    <location>
        <begin position="261"/>
        <end position="274"/>
    </location>
</feature>
<feature type="glycosylation site" description="N-linked (GlcNAc...) asparagine" evidence="4">
    <location>
        <position position="153"/>
    </location>
</feature>
<feature type="disulfide bond" evidence="5">
    <location>
        <begin position="26"/>
        <end position="37"/>
    </location>
</feature>
<feature type="disulfide bond" evidence="5">
    <location>
        <begin position="38"/>
        <end position="51"/>
    </location>
</feature>
<feature type="disulfide bond" evidence="5">
    <location>
        <begin position="41"/>
        <end position="59"/>
    </location>
</feature>
<feature type="disulfide bond" evidence="5">
    <location>
        <begin position="62"/>
        <end position="77"/>
    </location>
</feature>
<feature type="disulfide bond" evidence="5">
    <location>
        <begin position="83"/>
        <end position="103"/>
    </location>
</feature>
<feature type="disulfide bond" evidence="5">
    <location>
        <begin position="105"/>
        <end position="119"/>
    </location>
</feature>
<feature type="disulfide bond" evidence="5">
    <location>
        <begin position="111"/>
        <end position="116"/>
    </location>
</feature>
<feature type="disulfide bond" evidence="5">
    <location>
        <begin position="125"/>
        <end position="143"/>
    </location>
</feature>
<accession>Q3LRP1</accession>
<protein>
    <recommendedName>
        <fullName>Tumor necrosis factor receptor superfamily member 5</fullName>
    </recommendedName>
    <alternativeName>
        <fullName>B-cell surface antigen CD40</fullName>
    </alternativeName>
    <alternativeName>
        <fullName>CD40L receptor</fullName>
    </alternativeName>
    <cdAntigenName>CD40</cdAntigenName>
</protein>
<gene>
    <name type="primary">CD40</name>
    <name type="synonym">TNFRSF5</name>
</gene>
<comment type="function">
    <text evidence="2 3">Receptor for TNFSF5/CD40LG (By similarity). Transduces TRAF6- and MAP3K8-mediated signals that activate ERK in macrophages and B cells, leading to induction of immunoglobulin secretion (By similarity).</text>
</comment>
<comment type="subunit">
    <text evidence="1">Monomer and homodimer. Interacts with TRAF1, TRAF2, TRAF3, TRAF5 and TRAF6. Interacts with TRAF6 and MAP3K8; the interaction is required for ERK activation (By similarity).</text>
</comment>
<comment type="subcellular location">
    <subcellularLocation>
        <location>Membrane</location>
        <topology>Single-pass type I membrane protein</topology>
    </subcellularLocation>
</comment>
<dbReference type="EMBL" id="DQ189221">
    <property type="protein sequence ID" value="ABA29632.1"/>
    <property type="molecule type" value="mRNA"/>
</dbReference>
<dbReference type="RefSeq" id="NP_001254659.1">
    <property type="nucleotide sequence ID" value="NM_001267730.1"/>
</dbReference>
<dbReference type="SMR" id="Q3LRP1"/>
<dbReference type="FunCoup" id="Q3LRP1">
    <property type="interactions" value="659"/>
</dbReference>
<dbReference type="STRING" id="9483.ENSCJAP00000054885"/>
<dbReference type="GlyCosmos" id="Q3LRP1">
    <property type="glycosylation" value="1 site, No reported glycans"/>
</dbReference>
<dbReference type="Ensembl" id="ENSCJAT00000083281.3">
    <property type="protein sequence ID" value="ENSCJAP00000054885.1"/>
    <property type="gene ID" value="ENSCJAG00000017119.5"/>
</dbReference>
<dbReference type="GeneID" id="100385800"/>
<dbReference type="KEGG" id="cjc:100385800"/>
<dbReference type="CTD" id="958"/>
<dbReference type="eggNOG" id="ENOG502S5TQ">
    <property type="taxonomic scope" value="Eukaryota"/>
</dbReference>
<dbReference type="GeneTree" id="ENSGT00940000161464"/>
<dbReference type="InParanoid" id="Q3LRP1"/>
<dbReference type="OMA" id="WTKERHC"/>
<dbReference type="OrthoDB" id="9932129at2759"/>
<dbReference type="Proteomes" id="UP000008225">
    <property type="component" value="Chromosome 5"/>
</dbReference>
<dbReference type="Bgee" id="ENSCJAG00000017119">
    <property type="expression patterns" value="Expressed in testis and 6 other cell types or tissues"/>
</dbReference>
<dbReference type="GO" id="GO:0035631">
    <property type="term" value="C:CD40 receptor complex"/>
    <property type="evidence" value="ECO:0007669"/>
    <property type="project" value="Ensembl"/>
</dbReference>
<dbReference type="GO" id="GO:0009897">
    <property type="term" value="C:external side of plasma membrane"/>
    <property type="evidence" value="ECO:0007669"/>
    <property type="project" value="Ensembl"/>
</dbReference>
<dbReference type="GO" id="GO:0043231">
    <property type="term" value="C:intracellular membrane-bounded organelle"/>
    <property type="evidence" value="ECO:0007669"/>
    <property type="project" value="Ensembl"/>
</dbReference>
<dbReference type="GO" id="GO:0038023">
    <property type="term" value="F:signaling receptor activity"/>
    <property type="evidence" value="ECO:0007669"/>
    <property type="project" value="Ensembl"/>
</dbReference>
<dbReference type="GO" id="GO:0031625">
    <property type="term" value="F:ubiquitin protein ligase binding"/>
    <property type="evidence" value="ECO:0007669"/>
    <property type="project" value="Ensembl"/>
</dbReference>
<dbReference type="GO" id="GO:0019724">
    <property type="term" value="P:B cell mediated immunity"/>
    <property type="evidence" value="ECO:0007669"/>
    <property type="project" value="Ensembl"/>
</dbReference>
<dbReference type="GO" id="GO:0042100">
    <property type="term" value="P:B cell proliferation"/>
    <property type="evidence" value="ECO:0007669"/>
    <property type="project" value="Ensembl"/>
</dbReference>
<dbReference type="GO" id="GO:0023035">
    <property type="term" value="P:CD40 signaling pathway"/>
    <property type="evidence" value="ECO:0007669"/>
    <property type="project" value="Ensembl"/>
</dbReference>
<dbReference type="GO" id="GO:0007259">
    <property type="term" value="P:cell surface receptor signaling pathway via JAK-STAT"/>
    <property type="evidence" value="ECO:0007669"/>
    <property type="project" value="Ensembl"/>
</dbReference>
<dbReference type="GO" id="GO:0071260">
    <property type="term" value="P:cellular response to mechanical stimulus"/>
    <property type="evidence" value="ECO:0007669"/>
    <property type="project" value="Ensembl"/>
</dbReference>
<dbReference type="GO" id="GO:0042832">
    <property type="term" value="P:defense response to protozoan"/>
    <property type="evidence" value="ECO:0007669"/>
    <property type="project" value="Ensembl"/>
</dbReference>
<dbReference type="GO" id="GO:0051607">
    <property type="term" value="P:defense response to virus"/>
    <property type="evidence" value="ECO:0007669"/>
    <property type="project" value="Ensembl"/>
</dbReference>
<dbReference type="GO" id="GO:0002768">
    <property type="term" value="P:immune response-regulating cell surface receptor signaling pathway"/>
    <property type="evidence" value="ECO:0007669"/>
    <property type="project" value="Ensembl"/>
</dbReference>
<dbReference type="GO" id="GO:0006874">
    <property type="term" value="P:intracellular calcium ion homeostasis"/>
    <property type="evidence" value="ECO:0007669"/>
    <property type="project" value="Ensembl"/>
</dbReference>
<dbReference type="GO" id="GO:0043491">
    <property type="term" value="P:phosphatidylinositol 3-kinase/protein kinase B signal transduction"/>
    <property type="evidence" value="ECO:0007669"/>
    <property type="project" value="Ensembl"/>
</dbReference>
<dbReference type="GO" id="GO:0045766">
    <property type="term" value="P:positive regulation of angiogenesis"/>
    <property type="evidence" value="ECO:0007669"/>
    <property type="project" value="Ensembl"/>
</dbReference>
<dbReference type="GO" id="GO:0030890">
    <property type="term" value="P:positive regulation of B cell proliferation"/>
    <property type="evidence" value="ECO:0007669"/>
    <property type="project" value="Ensembl"/>
</dbReference>
<dbReference type="GO" id="GO:0043536">
    <property type="term" value="P:positive regulation of blood vessel endothelial cell migration"/>
    <property type="evidence" value="ECO:0007669"/>
    <property type="project" value="Ensembl"/>
</dbReference>
<dbReference type="GO" id="GO:0043123">
    <property type="term" value="P:positive regulation of canonical NF-kappaB signal transduction"/>
    <property type="evidence" value="ECO:0007669"/>
    <property type="project" value="Ensembl"/>
</dbReference>
<dbReference type="GO" id="GO:2000353">
    <property type="term" value="P:positive regulation of endothelial cell apoptotic process"/>
    <property type="evidence" value="ECO:0007669"/>
    <property type="project" value="Ensembl"/>
</dbReference>
<dbReference type="GO" id="GO:0032735">
    <property type="term" value="P:positive regulation of interleukin-12 production"/>
    <property type="evidence" value="ECO:0007669"/>
    <property type="project" value="Ensembl"/>
</dbReference>
<dbReference type="GO" id="GO:1902216">
    <property type="term" value="P:positive regulation of interleukin-4-mediated signaling pathway"/>
    <property type="evidence" value="ECO:0007669"/>
    <property type="project" value="Ensembl"/>
</dbReference>
<dbReference type="GO" id="GO:0048304">
    <property type="term" value="P:positive regulation of isotype switching to IgG isotypes"/>
    <property type="evidence" value="ECO:0007669"/>
    <property type="project" value="Ensembl"/>
</dbReference>
<dbReference type="GO" id="GO:0043410">
    <property type="term" value="P:positive regulation of MAPK cascade"/>
    <property type="evidence" value="ECO:0007669"/>
    <property type="project" value="Ensembl"/>
</dbReference>
<dbReference type="GO" id="GO:0090037">
    <property type="term" value="P:positive regulation of protein kinase C signaling"/>
    <property type="evidence" value="ECO:0007669"/>
    <property type="project" value="Ensembl"/>
</dbReference>
<dbReference type="GO" id="GO:0045944">
    <property type="term" value="P:positive regulation of transcription by RNA polymerase II"/>
    <property type="evidence" value="ECO:0007669"/>
    <property type="project" value="Ensembl"/>
</dbReference>
<dbReference type="CDD" id="cd13407">
    <property type="entry name" value="TNFRSF5"/>
    <property type="match status" value="1"/>
</dbReference>
<dbReference type="FunFam" id="2.10.50.10:FF:000041">
    <property type="entry name" value="Tumor necrosis factor receptor superfamily member 5"/>
    <property type="match status" value="1"/>
</dbReference>
<dbReference type="Gene3D" id="2.10.50.10">
    <property type="entry name" value="Tumor Necrosis Factor Receptor, subunit A, domain 2"/>
    <property type="match status" value="3"/>
</dbReference>
<dbReference type="InterPro" id="IPR001368">
    <property type="entry name" value="TNFR/NGFR_Cys_rich_reg"/>
</dbReference>
<dbReference type="InterPro" id="IPR020435">
    <property type="entry name" value="TNFR_5"/>
</dbReference>
<dbReference type="InterPro" id="IPR052135">
    <property type="entry name" value="TNFRSF5"/>
</dbReference>
<dbReference type="InterPro" id="IPR034021">
    <property type="entry name" value="TNFRSF5_N"/>
</dbReference>
<dbReference type="PANTHER" id="PTHR46875">
    <property type="entry name" value="TUMOR NECROSIS FACTOR RECEPTOR SUPERFAMILY MEMBER 5"/>
    <property type="match status" value="1"/>
</dbReference>
<dbReference type="PANTHER" id="PTHR46875:SF1">
    <property type="entry name" value="TUMOR NECROSIS FACTOR RECEPTOR SUPERFAMILY MEMBER 5"/>
    <property type="match status" value="1"/>
</dbReference>
<dbReference type="Pfam" id="PF00020">
    <property type="entry name" value="TNFR_c6"/>
    <property type="match status" value="2"/>
</dbReference>
<dbReference type="PRINTS" id="PR01922">
    <property type="entry name" value="TNFACTORR5"/>
</dbReference>
<dbReference type="SMART" id="SM00208">
    <property type="entry name" value="TNFR"/>
    <property type="match status" value="4"/>
</dbReference>
<dbReference type="SUPFAM" id="SSF57586">
    <property type="entry name" value="TNF receptor-like"/>
    <property type="match status" value="2"/>
</dbReference>
<dbReference type="PROSITE" id="PS00652">
    <property type="entry name" value="TNFR_NGFR_1"/>
    <property type="match status" value="1"/>
</dbReference>
<dbReference type="PROSITE" id="PS50050">
    <property type="entry name" value="TNFR_NGFR_2"/>
    <property type="match status" value="4"/>
</dbReference>